<dbReference type="EC" id="2.8.1.8" evidence="1"/>
<dbReference type="EMBL" id="CP000463">
    <property type="protein sequence ID" value="ABJ06689.1"/>
    <property type="molecule type" value="Genomic_DNA"/>
</dbReference>
<dbReference type="SMR" id="Q07MZ5"/>
<dbReference type="STRING" id="316055.RPE_2752"/>
<dbReference type="KEGG" id="rpe:RPE_2752"/>
<dbReference type="eggNOG" id="COG0320">
    <property type="taxonomic scope" value="Bacteria"/>
</dbReference>
<dbReference type="HOGENOM" id="CLU_033144_2_1_5"/>
<dbReference type="OrthoDB" id="9787898at2"/>
<dbReference type="UniPathway" id="UPA00538">
    <property type="reaction ID" value="UER00593"/>
</dbReference>
<dbReference type="GO" id="GO:0005737">
    <property type="term" value="C:cytoplasm"/>
    <property type="evidence" value="ECO:0007669"/>
    <property type="project" value="UniProtKB-SubCell"/>
</dbReference>
<dbReference type="GO" id="GO:0051539">
    <property type="term" value="F:4 iron, 4 sulfur cluster binding"/>
    <property type="evidence" value="ECO:0007669"/>
    <property type="project" value="UniProtKB-UniRule"/>
</dbReference>
<dbReference type="GO" id="GO:0016992">
    <property type="term" value="F:lipoate synthase activity"/>
    <property type="evidence" value="ECO:0007669"/>
    <property type="project" value="UniProtKB-UniRule"/>
</dbReference>
<dbReference type="GO" id="GO:0046872">
    <property type="term" value="F:metal ion binding"/>
    <property type="evidence" value="ECO:0007669"/>
    <property type="project" value="UniProtKB-KW"/>
</dbReference>
<dbReference type="CDD" id="cd01335">
    <property type="entry name" value="Radical_SAM"/>
    <property type="match status" value="1"/>
</dbReference>
<dbReference type="FunFam" id="3.20.20.70:FF:000040">
    <property type="entry name" value="Lipoyl synthase"/>
    <property type="match status" value="1"/>
</dbReference>
<dbReference type="Gene3D" id="3.20.20.70">
    <property type="entry name" value="Aldolase class I"/>
    <property type="match status" value="1"/>
</dbReference>
<dbReference type="HAMAP" id="MF_00206">
    <property type="entry name" value="Lipoyl_synth"/>
    <property type="match status" value="1"/>
</dbReference>
<dbReference type="InterPro" id="IPR013785">
    <property type="entry name" value="Aldolase_TIM"/>
</dbReference>
<dbReference type="InterPro" id="IPR006638">
    <property type="entry name" value="Elp3/MiaA/NifB-like_rSAM"/>
</dbReference>
<dbReference type="InterPro" id="IPR003698">
    <property type="entry name" value="Lipoyl_synth"/>
</dbReference>
<dbReference type="InterPro" id="IPR007197">
    <property type="entry name" value="rSAM"/>
</dbReference>
<dbReference type="NCBIfam" id="TIGR00510">
    <property type="entry name" value="lipA"/>
    <property type="match status" value="1"/>
</dbReference>
<dbReference type="NCBIfam" id="NF004019">
    <property type="entry name" value="PRK05481.1"/>
    <property type="match status" value="1"/>
</dbReference>
<dbReference type="NCBIfam" id="NF009544">
    <property type="entry name" value="PRK12928.1"/>
    <property type="match status" value="1"/>
</dbReference>
<dbReference type="PANTHER" id="PTHR10949">
    <property type="entry name" value="LIPOYL SYNTHASE"/>
    <property type="match status" value="1"/>
</dbReference>
<dbReference type="PANTHER" id="PTHR10949:SF0">
    <property type="entry name" value="LIPOYL SYNTHASE, MITOCHONDRIAL"/>
    <property type="match status" value="1"/>
</dbReference>
<dbReference type="Pfam" id="PF04055">
    <property type="entry name" value="Radical_SAM"/>
    <property type="match status" value="1"/>
</dbReference>
<dbReference type="PIRSF" id="PIRSF005963">
    <property type="entry name" value="Lipoyl_synth"/>
    <property type="match status" value="1"/>
</dbReference>
<dbReference type="SFLD" id="SFLDF00271">
    <property type="entry name" value="lipoyl_synthase"/>
    <property type="match status" value="1"/>
</dbReference>
<dbReference type="SFLD" id="SFLDG01058">
    <property type="entry name" value="lipoyl_synthase_like"/>
    <property type="match status" value="1"/>
</dbReference>
<dbReference type="SMART" id="SM00729">
    <property type="entry name" value="Elp3"/>
    <property type="match status" value="1"/>
</dbReference>
<dbReference type="SUPFAM" id="SSF102114">
    <property type="entry name" value="Radical SAM enzymes"/>
    <property type="match status" value="1"/>
</dbReference>
<dbReference type="PROSITE" id="PS51918">
    <property type="entry name" value="RADICAL_SAM"/>
    <property type="match status" value="1"/>
</dbReference>
<protein>
    <recommendedName>
        <fullName evidence="1">Lipoyl synthase</fullName>
        <ecNumber evidence="1">2.8.1.8</ecNumber>
    </recommendedName>
    <alternativeName>
        <fullName evidence="1">Lip-syn</fullName>
        <shortName evidence="1">LS</shortName>
    </alternativeName>
    <alternativeName>
        <fullName evidence="1">Lipoate synthase</fullName>
    </alternativeName>
    <alternativeName>
        <fullName evidence="1">Lipoic acid synthase</fullName>
    </alternativeName>
    <alternativeName>
        <fullName evidence="1">Sulfur insertion protein LipA</fullName>
    </alternativeName>
</protein>
<feature type="chain" id="PRO_1000012262" description="Lipoyl synthase">
    <location>
        <begin position="1"/>
        <end position="319"/>
    </location>
</feature>
<feature type="domain" description="Radical SAM core" evidence="2">
    <location>
        <begin position="73"/>
        <end position="289"/>
    </location>
</feature>
<feature type="region of interest" description="Disordered" evidence="3">
    <location>
        <begin position="1"/>
        <end position="29"/>
    </location>
</feature>
<feature type="compositionally biased region" description="Basic and acidic residues" evidence="3">
    <location>
        <begin position="8"/>
        <end position="29"/>
    </location>
</feature>
<feature type="binding site" evidence="1">
    <location>
        <position position="61"/>
    </location>
    <ligand>
        <name>[4Fe-4S] cluster</name>
        <dbReference type="ChEBI" id="CHEBI:49883"/>
        <label>1</label>
    </ligand>
</feature>
<feature type="binding site" evidence="1">
    <location>
        <position position="66"/>
    </location>
    <ligand>
        <name>[4Fe-4S] cluster</name>
        <dbReference type="ChEBI" id="CHEBI:49883"/>
        <label>1</label>
    </ligand>
</feature>
<feature type="binding site" evidence="1">
    <location>
        <position position="72"/>
    </location>
    <ligand>
        <name>[4Fe-4S] cluster</name>
        <dbReference type="ChEBI" id="CHEBI:49883"/>
        <label>1</label>
    </ligand>
</feature>
<feature type="binding site" evidence="1">
    <location>
        <position position="87"/>
    </location>
    <ligand>
        <name>[4Fe-4S] cluster</name>
        <dbReference type="ChEBI" id="CHEBI:49883"/>
        <label>2</label>
        <note>4Fe-4S-S-AdoMet</note>
    </ligand>
</feature>
<feature type="binding site" evidence="1">
    <location>
        <position position="91"/>
    </location>
    <ligand>
        <name>[4Fe-4S] cluster</name>
        <dbReference type="ChEBI" id="CHEBI:49883"/>
        <label>2</label>
        <note>4Fe-4S-S-AdoMet</note>
    </ligand>
</feature>
<feature type="binding site" evidence="1">
    <location>
        <position position="94"/>
    </location>
    <ligand>
        <name>[4Fe-4S] cluster</name>
        <dbReference type="ChEBI" id="CHEBI:49883"/>
        <label>2</label>
        <note>4Fe-4S-S-AdoMet</note>
    </ligand>
</feature>
<feature type="binding site" evidence="1">
    <location>
        <position position="300"/>
    </location>
    <ligand>
        <name>[4Fe-4S] cluster</name>
        <dbReference type="ChEBI" id="CHEBI:49883"/>
        <label>1</label>
    </ligand>
</feature>
<comment type="function">
    <text evidence="1">Catalyzes the radical-mediated insertion of two sulfur atoms into the C-6 and C-8 positions of the octanoyl moiety bound to the lipoyl domains of lipoate-dependent enzymes, thereby converting the octanoylated domains into lipoylated derivatives.</text>
</comment>
<comment type="catalytic activity">
    <reaction evidence="1">
        <text>[[Fe-S] cluster scaffold protein carrying a second [4Fe-4S](2+) cluster] + N(6)-octanoyl-L-lysyl-[protein] + 2 oxidized [2Fe-2S]-[ferredoxin] + 2 S-adenosyl-L-methionine + 4 H(+) = [[Fe-S] cluster scaffold protein] + N(6)-[(R)-dihydrolipoyl]-L-lysyl-[protein] + 4 Fe(3+) + 2 hydrogen sulfide + 2 5'-deoxyadenosine + 2 L-methionine + 2 reduced [2Fe-2S]-[ferredoxin]</text>
        <dbReference type="Rhea" id="RHEA:16585"/>
        <dbReference type="Rhea" id="RHEA-COMP:9928"/>
        <dbReference type="Rhea" id="RHEA-COMP:10000"/>
        <dbReference type="Rhea" id="RHEA-COMP:10001"/>
        <dbReference type="Rhea" id="RHEA-COMP:10475"/>
        <dbReference type="Rhea" id="RHEA-COMP:14568"/>
        <dbReference type="Rhea" id="RHEA-COMP:14569"/>
        <dbReference type="ChEBI" id="CHEBI:15378"/>
        <dbReference type="ChEBI" id="CHEBI:17319"/>
        <dbReference type="ChEBI" id="CHEBI:29034"/>
        <dbReference type="ChEBI" id="CHEBI:29919"/>
        <dbReference type="ChEBI" id="CHEBI:33722"/>
        <dbReference type="ChEBI" id="CHEBI:33737"/>
        <dbReference type="ChEBI" id="CHEBI:33738"/>
        <dbReference type="ChEBI" id="CHEBI:57844"/>
        <dbReference type="ChEBI" id="CHEBI:59789"/>
        <dbReference type="ChEBI" id="CHEBI:78809"/>
        <dbReference type="ChEBI" id="CHEBI:83100"/>
        <dbReference type="EC" id="2.8.1.8"/>
    </reaction>
</comment>
<comment type="cofactor">
    <cofactor evidence="1">
        <name>[4Fe-4S] cluster</name>
        <dbReference type="ChEBI" id="CHEBI:49883"/>
    </cofactor>
    <text evidence="1">Binds 2 [4Fe-4S] clusters per subunit. One cluster is coordinated with 3 cysteines and an exchangeable S-adenosyl-L-methionine.</text>
</comment>
<comment type="pathway">
    <text evidence="1">Protein modification; protein lipoylation via endogenous pathway; protein N(6)-(lipoyl)lysine from octanoyl-[acyl-carrier-protein]: step 2/2.</text>
</comment>
<comment type="subcellular location">
    <subcellularLocation>
        <location evidence="1">Cytoplasm</location>
    </subcellularLocation>
</comment>
<comment type="similarity">
    <text evidence="1">Belongs to the radical SAM superfamily. Lipoyl synthase family.</text>
</comment>
<accession>Q07MZ5</accession>
<name>LIPA_RHOP5</name>
<keyword id="KW-0004">4Fe-4S</keyword>
<keyword id="KW-0963">Cytoplasm</keyword>
<keyword id="KW-0408">Iron</keyword>
<keyword id="KW-0411">Iron-sulfur</keyword>
<keyword id="KW-0479">Metal-binding</keyword>
<keyword id="KW-0949">S-adenosyl-L-methionine</keyword>
<keyword id="KW-0808">Transferase</keyword>
<organism>
    <name type="scientific">Rhodopseudomonas palustris (strain BisA53)</name>
    <dbReference type="NCBI Taxonomy" id="316055"/>
    <lineage>
        <taxon>Bacteria</taxon>
        <taxon>Pseudomonadati</taxon>
        <taxon>Pseudomonadota</taxon>
        <taxon>Alphaproteobacteria</taxon>
        <taxon>Hyphomicrobiales</taxon>
        <taxon>Nitrobacteraceae</taxon>
        <taxon>Rhodopseudomonas</taxon>
    </lineage>
</organism>
<proteinExistence type="inferred from homology"/>
<gene>
    <name evidence="1" type="primary">lipA</name>
    <name type="ordered locus">RPE_2752</name>
</gene>
<evidence type="ECO:0000255" key="1">
    <source>
        <dbReference type="HAMAP-Rule" id="MF_00206"/>
    </source>
</evidence>
<evidence type="ECO:0000255" key="2">
    <source>
        <dbReference type="PROSITE-ProRule" id="PRU01266"/>
    </source>
</evidence>
<evidence type="ECO:0000256" key="3">
    <source>
        <dbReference type="SAM" id="MobiDB-lite"/>
    </source>
</evidence>
<sequence length="319" mass="34870">MVVVVDTVSDKPIRPRHPEKAARPDALSPKKPDWIRVRAPTSRGYADTRAIVKENGLHTVCEEAGCPNIGECWDRKHATFMIMGDTCTRACAFCNVKTGMPAALDGAEPANVAEATAKLGLAHLVITSVDRDDLADGGAAHIAATIRAVRERCPSTTIEVLTPDFLRKDGALEIVVAAKPDVFNHNLETVPARYLEVRPGARYFHSIRLLQRAKEIDPTLFTKSGIMLGLGEQRSEVLQVMDDLRSADVDFLTIGQYLQPTLKHHAVMSYIPPEEFSSYESLAYAKGFLMVSSSPMTRSSHHAGADFAKLQAARAALPR</sequence>
<reference key="1">
    <citation type="submission" date="2006-09" db="EMBL/GenBank/DDBJ databases">
        <title>Complete sequence of Rhodopseudomonas palustris BisA53.</title>
        <authorList>
            <consortium name="US DOE Joint Genome Institute"/>
            <person name="Copeland A."/>
            <person name="Lucas S."/>
            <person name="Lapidus A."/>
            <person name="Barry K."/>
            <person name="Detter J.C."/>
            <person name="Glavina del Rio T."/>
            <person name="Hammon N."/>
            <person name="Israni S."/>
            <person name="Dalin E."/>
            <person name="Tice H."/>
            <person name="Pitluck S."/>
            <person name="Chain P."/>
            <person name="Malfatti S."/>
            <person name="Shin M."/>
            <person name="Vergez L."/>
            <person name="Schmutz J."/>
            <person name="Larimer F."/>
            <person name="Land M."/>
            <person name="Hauser L."/>
            <person name="Pelletier D.A."/>
            <person name="Kyrpides N."/>
            <person name="Kim E."/>
            <person name="Harwood C.S."/>
            <person name="Oda Y."/>
            <person name="Richardson P."/>
        </authorList>
    </citation>
    <scope>NUCLEOTIDE SEQUENCE [LARGE SCALE GENOMIC DNA]</scope>
    <source>
        <strain>BisA53</strain>
    </source>
</reference>